<gene>
    <name type="ordered locus">YPA_1696</name>
</gene>
<keyword id="KW-0997">Cell inner membrane</keyword>
<keyword id="KW-1003">Cell membrane</keyword>
<keyword id="KW-0472">Membrane</keyword>
<keyword id="KW-0812">Transmembrane</keyword>
<keyword id="KW-1133">Transmembrane helix</keyword>
<comment type="subcellular location">
    <subcellularLocation>
        <location evidence="1">Cell inner membrane</location>
        <topology evidence="1">Multi-pass membrane protein</topology>
    </subcellularLocation>
</comment>
<comment type="similarity">
    <text evidence="1">Belongs to the UPF0283 family.</text>
</comment>
<protein>
    <recommendedName>
        <fullName evidence="1">UPF0283 membrane protein YPA_1696</fullName>
    </recommendedName>
</protein>
<evidence type="ECO:0000255" key="1">
    <source>
        <dbReference type="HAMAP-Rule" id="MF_01085"/>
    </source>
</evidence>
<feature type="chain" id="PRO_1000064858" description="UPF0283 membrane protein YPA_1696">
    <location>
        <begin position="1"/>
        <end position="353"/>
    </location>
</feature>
<feature type="transmembrane region" description="Helical" evidence="1">
    <location>
        <begin position="71"/>
        <end position="91"/>
    </location>
</feature>
<feature type="transmembrane region" description="Helical" evidence="1">
    <location>
        <begin position="101"/>
        <end position="121"/>
    </location>
</feature>
<feature type="transmembrane region" description="Helical" evidence="1">
    <location>
        <begin position="214"/>
        <end position="234"/>
    </location>
</feature>
<dbReference type="EMBL" id="CP000308">
    <property type="protein sequence ID" value="ABG13662.1"/>
    <property type="molecule type" value="Genomic_DNA"/>
</dbReference>
<dbReference type="RefSeq" id="WP_002210980.1">
    <property type="nucleotide sequence ID" value="NZ_CP009906.1"/>
</dbReference>
<dbReference type="KEGG" id="ypa:YPA_1696"/>
<dbReference type="Proteomes" id="UP000001971">
    <property type="component" value="Chromosome"/>
</dbReference>
<dbReference type="GO" id="GO:0005886">
    <property type="term" value="C:plasma membrane"/>
    <property type="evidence" value="ECO:0007669"/>
    <property type="project" value="UniProtKB-SubCell"/>
</dbReference>
<dbReference type="HAMAP" id="MF_01085">
    <property type="entry name" value="UPF0283"/>
    <property type="match status" value="1"/>
</dbReference>
<dbReference type="InterPro" id="IPR021147">
    <property type="entry name" value="DUF697"/>
</dbReference>
<dbReference type="InterPro" id="IPR006507">
    <property type="entry name" value="UPF0283"/>
</dbReference>
<dbReference type="NCBIfam" id="TIGR01620">
    <property type="entry name" value="hyp_HI0043"/>
    <property type="match status" value="1"/>
</dbReference>
<dbReference type="PANTHER" id="PTHR39342">
    <property type="entry name" value="UPF0283 MEMBRANE PROTEIN YCJF"/>
    <property type="match status" value="1"/>
</dbReference>
<dbReference type="PANTHER" id="PTHR39342:SF1">
    <property type="entry name" value="UPF0283 MEMBRANE PROTEIN YCJF"/>
    <property type="match status" value="1"/>
</dbReference>
<dbReference type="Pfam" id="PF05128">
    <property type="entry name" value="DUF697"/>
    <property type="match status" value="1"/>
</dbReference>
<reference key="1">
    <citation type="journal article" date="2006" name="J. Bacteriol.">
        <title>Complete genome sequence of Yersinia pestis strains Antiqua and Nepal516: evidence of gene reduction in an emerging pathogen.</title>
        <authorList>
            <person name="Chain P.S.G."/>
            <person name="Hu P."/>
            <person name="Malfatti S.A."/>
            <person name="Radnedge L."/>
            <person name="Larimer F."/>
            <person name="Vergez L.M."/>
            <person name="Worsham P."/>
            <person name="Chu M.C."/>
            <person name="Andersen G.L."/>
        </authorList>
    </citation>
    <scope>NUCLEOTIDE SEQUENCE [LARGE SCALE GENOMIC DNA]</scope>
    <source>
        <strain>Antiqua</strain>
    </source>
</reference>
<sequence length="353" mass="39264">MSEPLKPRIDFEQPLQSLDEPVLKSAQAFDEQAAEKFYPAAPELDAEDEEGRVEGLVNAALKPKRSLWRKMVTAGMVILGASVIAQSVQWVNQAWQQQDWIALGATTAGGLIILAGVGSVVTEWRRLYHLRQRAEERDIARALLVSHGVGQGRVFCEKLARQAGLDQGHPALQRWQASLHETHNDREVVELYAKLVQPALDNQARAEISRYAAESALMIAVSPLALVDMAFIAWRNIRLINRIAALYGIELGYFSRIRLFRLVLLNIAFAGASELVREVGMDWLSQDLAARLSARAAQGIGAGLLTARLGIKAMELCRPLPWLEGDKPKLGDFRRQLMNQLKNTLPKKDKTAH</sequence>
<organism>
    <name type="scientific">Yersinia pestis bv. Antiqua (strain Antiqua)</name>
    <dbReference type="NCBI Taxonomy" id="360102"/>
    <lineage>
        <taxon>Bacteria</taxon>
        <taxon>Pseudomonadati</taxon>
        <taxon>Pseudomonadota</taxon>
        <taxon>Gammaproteobacteria</taxon>
        <taxon>Enterobacterales</taxon>
        <taxon>Yersiniaceae</taxon>
        <taxon>Yersinia</taxon>
    </lineage>
</organism>
<proteinExistence type="inferred from homology"/>
<name>Y1696_YERPA</name>
<accession>Q1C7B0</accession>